<accession>Q2YNT7</accession>
<keyword id="KW-0004">4Fe-4S</keyword>
<keyword id="KW-0342">GTP-binding</keyword>
<keyword id="KW-0408">Iron</keyword>
<keyword id="KW-0411">Iron-sulfur</keyword>
<keyword id="KW-0456">Lyase</keyword>
<keyword id="KW-0479">Metal-binding</keyword>
<keyword id="KW-0501">Molybdenum cofactor biosynthesis</keyword>
<keyword id="KW-0547">Nucleotide-binding</keyword>
<keyword id="KW-1185">Reference proteome</keyword>
<keyword id="KW-0949">S-adenosyl-L-methionine</keyword>
<name>MOAA_BRUA2</name>
<comment type="function">
    <text evidence="1">Catalyzes the cyclization of GTP to (8S)-3',8-cyclo-7,8-dihydroguanosine 5'-triphosphate.</text>
</comment>
<comment type="catalytic activity">
    <reaction evidence="1">
        <text>GTP + AH2 + S-adenosyl-L-methionine = (8S)-3',8-cyclo-7,8-dihydroguanosine 5'-triphosphate + 5'-deoxyadenosine + L-methionine + A + H(+)</text>
        <dbReference type="Rhea" id="RHEA:49576"/>
        <dbReference type="ChEBI" id="CHEBI:13193"/>
        <dbReference type="ChEBI" id="CHEBI:15378"/>
        <dbReference type="ChEBI" id="CHEBI:17319"/>
        <dbReference type="ChEBI" id="CHEBI:17499"/>
        <dbReference type="ChEBI" id="CHEBI:37565"/>
        <dbReference type="ChEBI" id="CHEBI:57844"/>
        <dbReference type="ChEBI" id="CHEBI:59789"/>
        <dbReference type="ChEBI" id="CHEBI:131766"/>
        <dbReference type="EC" id="4.1.99.22"/>
    </reaction>
</comment>
<comment type="cofactor">
    <cofactor evidence="1">
        <name>[4Fe-4S] cluster</name>
        <dbReference type="ChEBI" id="CHEBI:49883"/>
    </cofactor>
    <text evidence="1">Binds 2 [4Fe-4S] clusters. Binds 1 [4Fe-4S] cluster coordinated with 3 cysteines and an exchangeable S-adenosyl-L-methionine and 1 [4Fe-4S] cluster coordinated with 3 cysteines and the GTP-derived substrate.</text>
</comment>
<comment type="pathway">
    <text evidence="1">Cofactor biosynthesis; molybdopterin biosynthesis.</text>
</comment>
<comment type="subunit">
    <text evidence="1">Monomer and homodimer.</text>
</comment>
<comment type="similarity">
    <text evidence="1">Belongs to the radical SAM superfamily. MoaA family.</text>
</comment>
<reference key="1">
    <citation type="journal article" date="2005" name="Infect. Immun.">
        <title>Whole-genome analyses of speciation events in pathogenic Brucellae.</title>
        <authorList>
            <person name="Chain P.S."/>
            <person name="Comerci D.J."/>
            <person name="Tolmasky M.E."/>
            <person name="Larimer F.W."/>
            <person name="Malfatti S.A."/>
            <person name="Vergez L.M."/>
            <person name="Aguero F."/>
            <person name="Land M.L."/>
            <person name="Ugalde R.A."/>
            <person name="Garcia E."/>
        </authorList>
    </citation>
    <scope>NUCLEOTIDE SEQUENCE [LARGE SCALE GENOMIC DNA]</scope>
    <source>
        <strain>2308</strain>
    </source>
</reference>
<protein>
    <recommendedName>
        <fullName evidence="1">GTP 3',8-cyclase</fullName>
        <ecNumber evidence="1">4.1.99.22</ecNumber>
    </recommendedName>
    <alternativeName>
        <fullName evidence="1">Molybdenum cofactor biosynthesis protein A</fullName>
    </alternativeName>
</protein>
<gene>
    <name evidence="1" type="primary">moaA</name>
    <name type="ordered locus">BAB1_0973</name>
</gene>
<feature type="chain" id="PRO_1000054175" description="GTP 3',8-cyclase">
    <location>
        <begin position="1"/>
        <end position="344"/>
    </location>
</feature>
<feature type="domain" description="Radical SAM core" evidence="2">
    <location>
        <begin position="19"/>
        <end position="245"/>
    </location>
</feature>
<feature type="binding site" evidence="1">
    <location>
        <position position="28"/>
    </location>
    <ligand>
        <name>GTP</name>
        <dbReference type="ChEBI" id="CHEBI:37565"/>
    </ligand>
</feature>
<feature type="binding site" evidence="1">
    <location>
        <position position="35"/>
    </location>
    <ligand>
        <name>[4Fe-4S] cluster</name>
        <dbReference type="ChEBI" id="CHEBI:49883"/>
        <label>1</label>
        <note>4Fe-4S-S-AdoMet</note>
    </ligand>
</feature>
<feature type="binding site" evidence="1">
    <location>
        <position position="39"/>
    </location>
    <ligand>
        <name>[4Fe-4S] cluster</name>
        <dbReference type="ChEBI" id="CHEBI:49883"/>
        <label>1</label>
        <note>4Fe-4S-S-AdoMet</note>
    </ligand>
</feature>
<feature type="binding site" evidence="1">
    <location>
        <position position="41"/>
    </location>
    <ligand>
        <name>S-adenosyl-L-methionine</name>
        <dbReference type="ChEBI" id="CHEBI:59789"/>
    </ligand>
</feature>
<feature type="binding site" evidence="1">
    <location>
        <position position="42"/>
    </location>
    <ligand>
        <name>[4Fe-4S] cluster</name>
        <dbReference type="ChEBI" id="CHEBI:49883"/>
        <label>1</label>
        <note>4Fe-4S-S-AdoMet</note>
    </ligand>
</feature>
<feature type="binding site" evidence="1">
    <location>
        <position position="77"/>
    </location>
    <ligand>
        <name>GTP</name>
        <dbReference type="ChEBI" id="CHEBI:37565"/>
    </ligand>
</feature>
<feature type="binding site" evidence="1">
    <location>
        <position position="81"/>
    </location>
    <ligand>
        <name>S-adenosyl-L-methionine</name>
        <dbReference type="ChEBI" id="CHEBI:59789"/>
    </ligand>
</feature>
<feature type="binding site" evidence="1">
    <location>
        <position position="111"/>
    </location>
    <ligand>
        <name>GTP</name>
        <dbReference type="ChEBI" id="CHEBI:37565"/>
    </ligand>
</feature>
<feature type="binding site" evidence="1">
    <location>
        <position position="135"/>
    </location>
    <ligand>
        <name>S-adenosyl-L-methionine</name>
        <dbReference type="ChEBI" id="CHEBI:59789"/>
    </ligand>
</feature>
<feature type="binding site" evidence="1">
    <location>
        <position position="171"/>
    </location>
    <ligand>
        <name>GTP</name>
        <dbReference type="ChEBI" id="CHEBI:37565"/>
    </ligand>
</feature>
<feature type="binding site" evidence="1">
    <location>
        <position position="205"/>
    </location>
    <ligand>
        <name>S-adenosyl-L-methionine</name>
        <dbReference type="ChEBI" id="CHEBI:59789"/>
    </ligand>
</feature>
<feature type="binding site" evidence="1">
    <location>
        <position position="268"/>
    </location>
    <ligand>
        <name>[4Fe-4S] cluster</name>
        <dbReference type="ChEBI" id="CHEBI:49883"/>
        <label>2</label>
        <note>4Fe-4S-substrate</note>
    </ligand>
</feature>
<feature type="binding site" evidence="1">
    <location>
        <position position="271"/>
    </location>
    <ligand>
        <name>[4Fe-4S] cluster</name>
        <dbReference type="ChEBI" id="CHEBI:49883"/>
        <label>2</label>
        <note>4Fe-4S-substrate</note>
    </ligand>
</feature>
<feature type="binding site" evidence="1">
    <location>
        <begin position="273"/>
        <end position="275"/>
    </location>
    <ligand>
        <name>GTP</name>
        <dbReference type="ChEBI" id="CHEBI:37565"/>
    </ligand>
</feature>
<feature type="binding site" evidence="1">
    <location>
        <position position="285"/>
    </location>
    <ligand>
        <name>[4Fe-4S] cluster</name>
        <dbReference type="ChEBI" id="CHEBI:49883"/>
        <label>2</label>
        <note>4Fe-4S-substrate</note>
    </ligand>
</feature>
<organism>
    <name type="scientific">Brucella abortus (strain 2308)</name>
    <dbReference type="NCBI Taxonomy" id="359391"/>
    <lineage>
        <taxon>Bacteria</taxon>
        <taxon>Pseudomonadati</taxon>
        <taxon>Pseudomonadota</taxon>
        <taxon>Alphaproteobacteria</taxon>
        <taxon>Hyphomicrobiales</taxon>
        <taxon>Brucellaceae</taxon>
        <taxon>Brucella/Ochrobactrum group</taxon>
        <taxon>Brucella</taxon>
    </lineage>
</organism>
<evidence type="ECO:0000255" key="1">
    <source>
        <dbReference type="HAMAP-Rule" id="MF_01225"/>
    </source>
</evidence>
<evidence type="ECO:0000255" key="2">
    <source>
        <dbReference type="PROSITE-ProRule" id="PRU01266"/>
    </source>
</evidence>
<dbReference type="EC" id="4.1.99.22" evidence="1"/>
<dbReference type="EMBL" id="AM040264">
    <property type="protein sequence ID" value="CAJ10929.1"/>
    <property type="molecule type" value="Genomic_DNA"/>
</dbReference>
<dbReference type="RefSeq" id="WP_002966802.1">
    <property type="nucleotide sequence ID" value="NZ_KN046823.1"/>
</dbReference>
<dbReference type="SMR" id="Q2YNT7"/>
<dbReference type="STRING" id="359391.BAB1_0973"/>
<dbReference type="GeneID" id="93016679"/>
<dbReference type="KEGG" id="bmf:BAB1_0973"/>
<dbReference type="HOGENOM" id="CLU_009273_0_1_5"/>
<dbReference type="PhylomeDB" id="Q2YNT7"/>
<dbReference type="UniPathway" id="UPA00344"/>
<dbReference type="Proteomes" id="UP000002719">
    <property type="component" value="Chromosome I"/>
</dbReference>
<dbReference type="GO" id="GO:0051539">
    <property type="term" value="F:4 iron, 4 sulfur cluster binding"/>
    <property type="evidence" value="ECO:0007669"/>
    <property type="project" value="UniProtKB-UniRule"/>
</dbReference>
<dbReference type="GO" id="GO:0061799">
    <property type="term" value="F:cyclic pyranopterin monophosphate synthase activity"/>
    <property type="evidence" value="ECO:0007669"/>
    <property type="project" value="TreeGrafter"/>
</dbReference>
<dbReference type="GO" id="GO:0061798">
    <property type="term" value="F:GTP 3',8'-cyclase activity"/>
    <property type="evidence" value="ECO:0007669"/>
    <property type="project" value="UniProtKB-UniRule"/>
</dbReference>
<dbReference type="GO" id="GO:0005525">
    <property type="term" value="F:GTP binding"/>
    <property type="evidence" value="ECO:0007669"/>
    <property type="project" value="UniProtKB-UniRule"/>
</dbReference>
<dbReference type="GO" id="GO:0046872">
    <property type="term" value="F:metal ion binding"/>
    <property type="evidence" value="ECO:0007669"/>
    <property type="project" value="UniProtKB-KW"/>
</dbReference>
<dbReference type="GO" id="GO:1904047">
    <property type="term" value="F:S-adenosyl-L-methionine binding"/>
    <property type="evidence" value="ECO:0007669"/>
    <property type="project" value="UniProtKB-UniRule"/>
</dbReference>
<dbReference type="GO" id="GO:0006777">
    <property type="term" value="P:Mo-molybdopterin cofactor biosynthetic process"/>
    <property type="evidence" value="ECO:0007669"/>
    <property type="project" value="UniProtKB-UniRule"/>
</dbReference>
<dbReference type="CDD" id="cd01335">
    <property type="entry name" value="Radical_SAM"/>
    <property type="match status" value="1"/>
</dbReference>
<dbReference type="CDD" id="cd21117">
    <property type="entry name" value="Twitch_MoaA"/>
    <property type="match status" value="1"/>
</dbReference>
<dbReference type="Gene3D" id="3.20.20.70">
    <property type="entry name" value="Aldolase class I"/>
    <property type="match status" value="1"/>
</dbReference>
<dbReference type="HAMAP" id="MF_01225_B">
    <property type="entry name" value="MoaA_B"/>
    <property type="match status" value="1"/>
</dbReference>
<dbReference type="InterPro" id="IPR013785">
    <property type="entry name" value="Aldolase_TIM"/>
</dbReference>
<dbReference type="InterPro" id="IPR006638">
    <property type="entry name" value="Elp3/MiaA/NifB-like_rSAM"/>
</dbReference>
<dbReference type="InterPro" id="IPR013483">
    <property type="entry name" value="MoaA"/>
</dbReference>
<dbReference type="InterPro" id="IPR000385">
    <property type="entry name" value="MoaA_NifB_PqqE_Fe-S-bd_CS"/>
</dbReference>
<dbReference type="InterPro" id="IPR010505">
    <property type="entry name" value="MoaA_twitch"/>
</dbReference>
<dbReference type="InterPro" id="IPR050105">
    <property type="entry name" value="MoCo_biosynth_MoaA/MoaC"/>
</dbReference>
<dbReference type="InterPro" id="IPR007197">
    <property type="entry name" value="rSAM"/>
</dbReference>
<dbReference type="NCBIfam" id="TIGR02666">
    <property type="entry name" value="moaA"/>
    <property type="match status" value="1"/>
</dbReference>
<dbReference type="PANTHER" id="PTHR22960:SF0">
    <property type="entry name" value="MOLYBDENUM COFACTOR BIOSYNTHESIS PROTEIN 1"/>
    <property type="match status" value="1"/>
</dbReference>
<dbReference type="PANTHER" id="PTHR22960">
    <property type="entry name" value="MOLYBDOPTERIN COFACTOR SYNTHESIS PROTEIN A"/>
    <property type="match status" value="1"/>
</dbReference>
<dbReference type="Pfam" id="PF13353">
    <property type="entry name" value="Fer4_12"/>
    <property type="match status" value="1"/>
</dbReference>
<dbReference type="Pfam" id="PF06463">
    <property type="entry name" value="Mob_synth_C"/>
    <property type="match status" value="1"/>
</dbReference>
<dbReference type="Pfam" id="PF04055">
    <property type="entry name" value="Radical_SAM"/>
    <property type="match status" value="1"/>
</dbReference>
<dbReference type="SFLD" id="SFLDG01383">
    <property type="entry name" value="cyclic_pyranopterin_phosphate"/>
    <property type="match status" value="1"/>
</dbReference>
<dbReference type="SFLD" id="SFLDG01216">
    <property type="entry name" value="thioether_bond_formation_requi"/>
    <property type="match status" value="1"/>
</dbReference>
<dbReference type="SMART" id="SM00729">
    <property type="entry name" value="Elp3"/>
    <property type="match status" value="1"/>
</dbReference>
<dbReference type="SUPFAM" id="SSF102114">
    <property type="entry name" value="Radical SAM enzymes"/>
    <property type="match status" value="1"/>
</dbReference>
<dbReference type="PROSITE" id="PS01305">
    <property type="entry name" value="MOAA_NIFB_PQQE"/>
    <property type="match status" value="1"/>
</dbReference>
<dbReference type="PROSITE" id="PS51918">
    <property type="entry name" value="RADICAL_SAM"/>
    <property type="match status" value="1"/>
</dbReference>
<sequence length="344" mass="38687">MRNVQDQPLVSPTEPMIDPFGRAVTYLRVSVTDRCDFRCTYCMAEHMTFLPKKDLLTLEELDRLCSVFIEKGVRKLRLTGGEPLVRKNIMHLIGNLSRHLKSGALDELTLTTNGSQLARFAGELADCGVRRINVSLDTLNPEKFRTITRWGDLSRVLEGIDAAQKAAIHVKINAVALKDFNDAEIPELIRWAHGRGMDVTLIETMPMGEIEFDRTDQYLPLSQVRADLASQFTLADIPYRTGGPARYVTISETGGRLGFITPMTYNFCESCNRVRLTCTGMLYMCLGQNDDADLRKALRESESDEHLSQAIDEAISRKPKGHDFIIDREHNRPSVARHMSLTGG</sequence>
<proteinExistence type="inferred from homology"/>